<proteinExistence type="inferred from homology"/>
<accession>A5U0B2</accession>
<protein>
    <recommendedName>
        <fullName>Putative S-adenosyl-L-methionine-dependent methyltransferase MRA_0734</fullName>
        <ecNumber>2.1.1.-</ecNumber>
    </recommendedName>
</protein>
<keyword id="KW-0489">Methyltransferase</keyword>
<keyword id="KW-1185">Reference proteome</keyword>
<keyword id="KW-0949">S-adenosyl-L-methionine</keyword>
<keyword id="KW-0808">Transferase</keyword>
<sequence>MTYTGSIRCEGDTWDLASSVGATATMVAAARAMATRAANPLINDQFAEPLVRAVGVDVLTRLASGELTASDIDDPERPNASMVRMAEHHAVRTKFFDEFFMDATRAGIRQVVILASGLDSRAYRLAWPAQTVVYEIDQPQVMEFKTRTLAELGATPTADRRVVTADLRADWPTALGAAGFDPTQPTAWSAEGLLRYLPPEAQDRLLDNVTALSVPDSRFATESIRNFKPHHEERMRERMTILANRWRAYGFDLDMNELVYFGDRNEPASYLSDNGWLLTEIKSQDLLTANGFQPFEDEEVPLPDFFYVSARLQRKHRQYPAHRKPAPSWRHTACPVNELSKSAAYTMTRSDAHQASTTAPPPPGLTG</sequence>
<reference key="1">
    <citation type="journal article" date="2008" name="PLoS ONE">
        <title>Genetic basis of virulence attenuation revealed by comparative genomic analysis of Mycobacterium tuberculosis strain H37Ra versus H37Rv.</title>
        <authorList>
            <person name="Zheng H."/>
            <person name="Lu L."/>
            <person name="Wang B."/>
            <person name="Pu S."/>
            <person name="Zhang X."/>
            <person name="Zhu G."/>
            <person name="Shi W."/>
            <person name="Zhang L."/>
            <person name="Wang H."/>
            <person name="Wang S."/>
            <person name="Zhao G."/>
            <person name="Zhang Y."/>
        </authorList>
    </citation>
    <scope>NUCLEOTIDE SEQUENCE [LARGE SCALE GENOMIC DNA]</scope>
    <source>
        <strain>ATCC 25177 / H37Ra</strain>
    </source>
</reference>
<name>Y734_MYCTA</name>
<gene>
    <name type="ordered locus">MRA_0734</name>
</gene>
<organism>
    <name type="scientific">Mycobacterium tuberculosis (strain ATCC 25177 / H37Ra)</name>
    <dbReference type="NCBI Taxonomy" id="419947"/>
    <lineage>
        <taxon>Bacteria</taxon>
        <taxon>Bacillati</taxon>
        <taxon>Actinomycetota</taxon>
        <taxon>Actinomycetes</taxon>
        <taxon>Mycobacteriales</taxon>
        <taxon>Mycobacteriaceae</taxon>
        <taxon>Mycobacterium</taxon>
        <taxon>Mycobacterium tuberculosis complex</taxon>
    </lineage>
</organism>
<comment type="function">
    <text evidence="1">Exhibits S-adenosyl-L-methionine-dependent methyltransferase activity.</text>
</comment>
<comment type="similarity">
    <text evidence="3">Belongs to the UPF0677 family.</text>
</comment>
<dbReference type="EC" id="2.1.1.-"/>
<dbReference type="EMBL" id="CP000611">
    <property type="protein sequence ID" value="ABQ72462.1"/>
    <property type="molecule type" value="Genomic_DNA"/>
</dbReference>
<dbReference type="RefSeq" id="WP_003403691.1">
    <property type="nucleotide sequence ID" value="NZ_CP016972.1"/>
</dbReference>
<dbReference type="SMR" id="A5U0B2"/>
<dbReference type="KEGG" id="mra:MRA_0734"/>
<dbReference type="eggNOG" id="COG3315">
    <property type="taxonomic scope" value="Bacteria"/>
</dbReference>
<dbReference type="HOGENOM" id="CLU_056160_2_1_11"/>
<dbReference type="Proteomes" id="UP000001988">
    <property type="component" value="Chromosome"/>
</dbReference>
<dbReference type="GO" id="GO:0008168">
    <property type="term" value="F:methyltransferase activity"/>
    <property type="evidence" value="ECO:0007669"/>
    <property type="project" value="UniProtKB-KW"/>
</dbReference>
<dbReference type="GO" id="GO:0032259">
    <property type="term" value="P:methylation"/>
    <property type="evidence" value="ECO:0007669"/>
    <property type="project" value="UniProtKB-KW"/>
</dbReference>
<dbReference type="FunFam" id="3.40.50.150:FF:000152">
    <property type="entry name" value="S-adenosyl-L-methionine-dependent methyltransferase"/>
    <property type="match status" value="1"/>
</dbReference>
<dbReference type="Gene3D" id="3.40.50.150">
    <property type="entry name" value="Vaccinia Virus protein VP39"/>
    <property type="match status" value="1"/>
</dbReference>
<dbReference type="InterPro" id="IPR007213">
    <property type="entry name" value="Ppm1/Ppm2/Tcmp"/>
</dbReference>
<dbReference type="InterPro" id="IPR029063">
    <property type="entry name" value="SAM-dependent_MTases_sf"/>
</dbReference>
<dbReference type="InterPro" id="IPR011610">
    <property type="entry name" value="SAM_mthyl_Trfase_ML2640-like"/>
</dbReference>
<dbReference type="NCBIfam" id="TIGR00027">
    <property type="entry name" value="mthyl_TIGR00027"/>
    <property type="match status" value="1"/>
</dbReference>
<dbReference type="PANTHER" id="PTHR43619">
    <property type="entry name" value="S-ADENOSYL-L-METHIONINE-DEPENDENT METHYLTRANSFERASE YKTD-RELATED"/>
    <property type="match status" value="1"/>
</dbReference>
<dbReference type="PANTHER" id="PTHR43619:SF2">
    <property type="entry name" value="S-ADENOSYL-L-METHIONINE-DEPENDENT METHYLTRANSFERASES SUPERFAMILY PROTEIN"/>
    <property type="match status" value="1"/>
</dbReference>
<dbReference type="Pfam" id="PF04072">
    <property type="entry name" value="LCM"/>
    <property type="match status" value="1"/>
</dbReference>
<dbReference type="SUPFAM" id="SSF53335">
    <property type="entry name" value="S-adenosyl-L-methionine-dependent methyltransferases"/>
    <property type="match status" value="1"/>
</dbReference>
<feature type="chain" id="PRO_0000361231" description="Putative S-adenosyl-L-methionine-dependent methyltransferase MRA_0734">
    <location>
        <begin position="1"/>
        <end position="367"/>
    </location>
</feature>
<feature type="region of interest" description="Disordered" evidence="2">
    <location>
        <begin position="348"/>
        <end position="367"/>
    </location>
</feature>
<feature type="compositionally biased region" description="Polar residues" evidence="2">
    <location>
        <begin position="348"/>
        <end position="358"/>
    </location>
</feature>
<feature type="binding site" evidence="1">
    <location>
        <position position="137"/>
    </location>
    <ligand>
        <name>S-adenosyl-L-methionine</name>
        <dbReference type="ChEBI" id="CHEBI:59789"/>
    </ligand>
</feature>
<feature type="binding site" evidence="1">
    <location>
        <begin position="166"/>
        <end position="167"/>
    </location>
    <ligand>
        <name>S-adenosyl-L-methionine</name>
        <dbReference type="ChEBI" id="CHEBI:59789"/>
    </ligand>
</feature>
<evidence type="ECO:0000250" key="1"/>
<evidence type="ECO:0000256" key="2">
    <source>
        <dbReference type="SAM" id="MobiDB-lite"/>
    </source>
</evidence>
<evidence type="ECO:0000305" key="3"/>